<protein>
    <recommendedName>
        <fullName evidence="1">Large ribosomal subunit protein uL10</fullName>
    </recommendedName>
    <alternativeName>
        <fullName evidence="4">50S ribosomal protein L10</fullName>
    </alternativeName>
    <alternativeName>
        <fullName evidence="1">Acidic ribosomal protein P0 homolog</fullName>
    </alternativeName>
</protein>
<feature type="chain" id="PRO_1000006790" description="Large ribosomal subunit protein uL10">
    <location>
        <begin position="1"/>
        <end position="335"/>
    </location>
</feature>
<feature type="region of interest" description="Disordered" evidence="2">
    <location>
        <begin position="304"/>
        <end position="335"/>
    </location>
</feature>
<feature type="compositionally biased region" description="Basic and acidic residues" evidence="2">
    <location>
        <begin position="314"/>
        <end position="325"/>
    </location>
</feature>
<reference key="1">
    <citation type="journal article" date="2004" name="J. Bacteriol.">
        <title>Complete genome sequence of the genetically tractable hydrogenotrophic methanogen Methanococcus maripaludis.</title>
        <authorList>
            <person name="Hendrickson E.L."/>
            <person name="Kaul R."/>
            <person name="Zhou Y."/>
            <person name="Bovee D."/>
            <person name="Chapman P."/>
            <person name="Chung J."/>
            <person name="Conway de Macario E."/>
            <person name="Dodsworth J.A."/>
            <person name="Gillett W."/>
            <person name="Graham D.E."/>
            <person name="Hackett M."/>
            <person name="Haydock A.K."/>
            <person name="Kang A."/>
            <person name="Land M.L."/>
            <person name="Levy R."/>
            <person name="Lie T.J."/>
            <person name="Major T.A."/>
            <person name="Moore B.C."/>
            <person name="Porat I."/>
            <person name="Palmeiri A."/>
            <person name="Rouse G."/>
            <person name="Saenphimmachak C."/>
            <person name="Soell D."/>
            <person name="Van Dien S."/>
            <person name="Wang T."/>
            <person name="Whitman W.B."/>
            <person name="Xia Q."/>
            <person name="Zhang Y."/>
            <person name="Larimer F.W."/>
            <person name="Olson M.V."/>
            <person name="Leigh J.A."/>
        </authorList>
    </citation>
    <scope>NUCLEOTIDE SEQUENCE [LARGE SCALE GENOMIC DNA]</scope>
    <source>
        <strain>DSM 14266 / JCM 13030 / NBRC 101832 / S2 / LL</strain>
    </source>
</reference>
<reference key="2">
    <citation type="journal article" date="2010" name="Mol. Cell. Proteomics">
        <title>Mass spectrometry defines the stoichiometry of ribosomal stalk complexes across the phylogenetic tree.</title>
        <authorList>
            <person name="Gordiyenko Y."/>
            <person name="Videler H."/>
            <person name="Zhou M."/>
            <person name="McKay A.R."/>
            <person name="Fucini P."/>
            <person name="Biegel E."/>
            <person name="Muller V."/>
            <person name="Robinson C.V."/>
        </authorList>
    </citation>
    <scope>SUBUNIT</scope>
    <scope>STOICHIOMETRY</scope>
    <scope>MASS SPECTROMETRY</scope>
</reference>
<organism>
    <name type="scientific">Methanococcus maripaludis (strain DSM 14266 / JCM 13030 / NBRC 101832 / S2 / LL)</name>
    <dbReference type="NCBI Taxonomy" id="267377"/>
    <lineage>
        <taxon>Archaea</taxon>
        <taxon>Methanobacteriati</taxon>
        <taxon>Methanobacteriota</taxon>
        <taxon>Methanomada group</taxon>
        <taxon>Methanococci</taxon>
        <taxon>Methanococcales</taxon>
        <taxon>Methanococcaceae</taxon>
        <taxon>Methanococcus</taxon>
    </lineage>
</organism>
<proteinExistence type="evidence at protein level"/>
<accession>Q6M0L1</accession>
<name>RL10_METMP</name>
<gene>
    <name evidence="1" type="primary">rpl10</name>
    <name evidence="1" type="synonym">rplP0</name>
    <name type="ordered locus">MMP0259</name>
</gene>
<keyword id="KW-1185">Reference proteome</keyword>
<keyword id="KW-0687">Ribonucleoprotein</keyword>
<keyword id="KW-0689">Ribosomal protein</keyword>
<keyword id="KW-0694">RNA-binding</keyword>
<keyword id="KW-0699">rRNA-binding</keyword>
<sequence length="335" mass="35805">MIEAKSEHKIAPWKIEEVNALKELLKSSNIIALIDMMEVPAVQLQEIRDKIRDQMTLKMSRNTLMKRAIEEVAEETGNPEFAKLVDYMDKGAAIIATEMNPFKLYKTLDESKSPAPVKGGAIAPCDIEVKAGSTGMPPGPFLSELKAVGIPAAIDKGKIGIKEDKIVVKEGEVVSQKLAVVLSALDIKPVTVGLNVLGVYEDGVIYTESDLKIDEEEFVGKIQKAYTSAFNLSVNAVIPTSATVETIVQKAFNDAKAVSVESAFVTDKTADAILGKAYAQMIAVAGLAGDDALDEDLKGKISSGAAAPVEEAPVEEKKEEKKEEAAAPAGLGMLF</sequence>
<evidence type="ECO:0000255" key="1">
    <source>
        <dbReference type="HAMAP-Rule" id="MF_00280"/>
    </source>
</evidence>
<evidence type="ECO:0000256" key="2">
    <source>
        <dbReference type="SAM" id="MobiDB-lite"/>
    </source>
</evidence>
<evidence type="ECO:0000269" key="3">
    <source>
    </source>
</evidence>
<evidence type="ECO:0000305" key="4"/>
<comment type="function">
    <text evidence="1">Forms part of the ribosomal stalk, playing a central role in the interaction of the ribosome with GTP-bound translation factors.</text>
</comment>
<comment type="subunit">
    <text evidence="3">Part of the 50S ribosomal subunit. Homodimer, it forms part of the ribosomal stalk which helps the ribosome interact with GTP-bound translation factors. Forms both a pentameric L10(L12)2(L12)2 and heptameric L10(L12)2(L12)2(L12)2 complex, where L10 forms an elongated spine to which the L12 dimers bind in a sequential fashion. The proportion of heptameric complexes increases during cell growth.</text>
</comment>
<comment type="mass spectrometry" mass="95159.52" error="15.63" method="Electrospray" evidence="3">
    <text>Isolated L10(L12)6.</text>
</comment>
<comment type="mass spectrometry" mass="74814.8" error="4.99" method="Electrospray" evidence="3">
    <text>Isolated L10(L12)4.</text>
</comment>
<comment type="similarity">
    <text evidence="1">Belongs to the universal ribosomal protein uL10 family.</text>
</comment>
<dbReference type="EMBL" id="BX950229">
    <property type="protein sequence ID" value="CAF29815.1"/>
    <property type="molecule type" value="Genomic_DNA"/>
</dbReference>
<dbReference type="RefSeq" id="WP_011170203.1">
    <property type="nucleotide sequence ID" value="NC_005791.1"/>
</dbReference>
<dbReference type="SMR" id="Q6M0L1"/>
<dbReference type="STRING" id="267377.MMP0259"/>
<dbReference type="EnsemblBacteria" id="CAF29815">
    <property type="protein sequence ID" value="CAF29815"/>
    <property type="gene ID" value="MMP0259"/>
</dbReference>
<dbReference type="GeneID" id="10981690"/>
<dbReference type="KEGG" id="mmp:MMP0259"/>
<dbReference type="PATRIC" id="fig|267377.15.peg.261"/>
<dbReference type="eggNOG" id="arCOG04288">
    <property type="taxonomic scope" value="Archaea"/>
</dbReference>
<dbReference type="HOGENOM" id="CLU_053173_0_0_2"/>
<dbReference type="OrthoDB" id="30930at2157"/>
<dbReference type="Proteomes" id="UP000000590">
    <property type="component" value="Chromosome"/>
</dbReference>
<dbReference type="GO" id="GO:0022625">
    <property type="term" value="C:cytosolic large ribosomal subunit"/>
    <property type="evidence" value="ECO:0007669"/>
    <property type="project" value="TreeGrafter"/>
</dbReference>
<dbReference type="GO" id="GO:0070180">
    <property type="term" value="F:large ribosomal subunit rRNA binding"/>
    <property type="evidence" value="ECO:0007669"/>
    <property type="project" value="UniProtKB-UniRule"/>
</dbReference>
<dbReference type="GO" id="GO:0003735">
    <property type="term" value="F:structural constituent of ribosome"/>
    <property type="evidence" value="ECO:0007669"/>
    <property type="project" value="TreeGrafter"/>
</dbReference>
<dbReference type="GO" id="GO:0002181">
    <property type="term" value="P:cytoplasmic translation"/>
    <property type="evidence" value="ECO:0007669"/>
    <property type="project" value="TreeGrafter"/>
</dbReference>
<dbReference type="GO" id="GO:0000027">
    <property type="term" value="P:ribosomal large subunit assembly"/>
    <property type="evidence" value="ECO:0007669"/>
    <property type="project" value="TreeGrafter"/>
</dbReference>
<dbReference type="CDD" id="cd05795">
    <property type="entry name" value="Ribosomal_P0_L10e"/>
    <property type="match status" value="1"/>
</dbReference>
<dbReference type="FunFam" id="3.90.105.20:FF:000001">
    <property type="entry name" value="60S acidic ribosomal protein P0"/>
    <property type="match status" value="1"/>
</dbReference>
<dbReference type="Gene3D" id="3.30.70.1730">
    <property type="match status" value="1"/>
</dbReference>
<dbReference type="Gene3D" id="3.90.105.20">
    <property type="match status" value="1"/>
</dbReference>
<dbReference type="Gene3D" id="6.10.140.760">
    <property type="match status" value="1"/>
</dbReference>
<dbReference type="HAMAP" id="MF_00280">
    <property type="entry name" value="Ribosomal_uL10_arch"/>
    <property type="match status" value="1"/>
</dbReference>
<dbReference type="InterPro" id="IPR050323">
    <property type="entry name" value="Ribosomal_protein_uL10"/>
</dbReference>
<dbReference type="InterPro" id="IPR001790">
    <property type="entry name" value="Ribosomal_uL10"/>
</dbReference>
<dbReference type="InterPro" id="IPR040637">
    <property type="entry name" value="Ribosomal_uL10-like_insert"/>
</dbReference>
<dbReference type="InterPro" id="IPR043164">
    <property type="entry name" value="Ribosomal_uL10-like_insert_sf"/>
</dbReference>
<dbReference type="InterPro" id="IPR043141">
    <property type="entry name" value="Ribosomal_uL10-like_sf"/>
</dbReference>
<dbReference type="InterPro" id="IPR022909">
    <property type="entry name" value="Ribosomal_uL10_arc"/>
</dbReference>
<dbReference type="NCBIfam" id="NF003096">
    <property type="entry name" value="PRK04019.1-2"/>
    <property type="match status" value="1"/>
</dbReference>
<dbReference type="NCBIfam" id="NF003098">
    <property type="entry name" value="PRK04019.1-5"/>
    <property type="match status" value="1"/>
</dbReference>
<dbReference type="PANTHER" id="PTHR45699">
    <property type="entry name" value="60S ACIDIC RIBOSOMAL PROTEIN P0"/>
    <property type="match status" value="1"/>
</dbReference>
<dbReference type="PANTHER" id="PTHR45699:SF3">
    <property type="entry name" value="LARGE RIBOSOMAL SUBUNIT PROTEIN UL10"/>
    <property type="match status" value="1"/>
</dbReference>
<dbReference type="Pfam" id="PF00466">
    <property type="entry name" value="Ribosomal_L10"/>
    <property type="match status" value="1"/>
</dbReference>
<dbReference type="Pfam" id="PF17777">
    <property type="entry name" value="RL10P_insert"/>
    <property type="match status" value="1"/>
</dbReference>
<dbReference type="SUPFAM" id="SSF160369">
    <property type="entry name" value="Ribosomal protein L10-like"/>
    <property type="match status" value="1"/>
</dbReference>